<reference key="1">
    <citation type="journal article" date="1999" name="Trends Plant Sci.">
        <title>A guide to the Lhc genes and their relatives in Arabidopsis.</title>
        <authorList>
            <person name="Jansson S."/>
        </authorList>
    </citation>
    <scope>NUCLEOTIDE SEQUENCE [MRNA]</scope>
</reference>
<reference key="2">
    <citation type="journal article" date="1999" name="Nature">
        <title>Sequence and analysis of chromosome 4 of the plant Arabidopsis thaliana.</title>
        <authorList>
            <person name="Mayer K.F.X."/>
            <person name="Schueller C."/>
            <person name="Wambutt R."/>
            <person name="Murphy G."/>
            <person name="Volckaert G."/>
            <person name="Pohl T."/>
            <person name="Duesterhoeft A."/>
            <person name="Stiekema W."/>
            <person name="Entian K.-D."/>
            <person name="Terryn N."/>
            <person name="Harris B."/>
            <person name="Ansorge W."/>
            <person name="Brandt P."/>
            <person name="Grivell L.A."/>
            <person name="Rieger M."/>
            <person name="Weichselgartner M."/>
            <person name="de Simone V."/>
            <person name="Obermaier B."/>
            <person name="Mache R."/>
            <person name="Mueller M."/>
            <person name="Kreis M."/>
            <person name="Delseny M."/>
            <person name="Puigdomenech P."/>
            <person name="Watson M."/>
            <person name="Schmidtheini T."/>
            <person name="Reichert B."/>
            <person name="Portetelle D."/>
            <person name="Perez-Alonso M."/>
            <person name="Boutry M."/>
            <person name="Bancroft I."/>
            <person name="Vos P."/>
            <person name="Hoheisel J."/>
            <person name="Zimmermann W."/>
            <person name="Wedler H."/>
            <person name="Ridley P."/>
            <person name="Langham S.-A."/>
            <person name="McCullagh B."/>
            <person name="Bilham L."/>
            <person name="Robben J."/>
            <person name="van der Schueren J."/>
            <person name="Grymonprez B."/>
            <person name="Chuang Y.-J."/>
            <person name="Vandenbussche F."/>
            <person name="Braeken M."/>
            <person name="Weltjens I."/>
            <person name="Voet M."/>
            <person name="Bastiaens I."/>
            <person name="Aert R."/>
            <person name="Defoor E."/>
            <person name="Weitzenegger T."/>
            <person name="Bothe G."/>
            <person name="Ramsperger U."/>
            <person name="Hilbert H."/>
            <person name="Braun M."/>
            <person name="Holzer E."/>
            <person name="Brandt A."/>
            <person name="Peters S."/>
            <person name="van Staveren M."/>
            <person name="Dirkse W."/>
            <person name="Mooijman P."/>
            <person name="Klein Lankhorst R."/>
            <person name="Rose M."/>
            <person name="Hauf J."/>
            <person name="Koetter P."/>
            <person name="Berneiser S."/>
            <person name="Hempel S."/>
            <person name="Feldpausch M."/>
            <person name="Lamberth S."/>
            <person name="Van den Daele H."/>
            <person name="De Keyser A."/>
            <person name="Buysshaert C."/>
            <person name="Gielen J."/>
            <person name="Villarroel R."/>
            <person name="De Clercq R."/>
            <person name="van Montagu M."/>
            <person name="Rogers J."/>
            <person name="Cronin A."/>
            <person name="Quail M.A."/>
            <person name="Bray-Allen S."/>
            <person name="Clark L."/>
            <person name="Doggett J."/>
            <person name="Hall S."/>
            <person name="Kay M."/>
            <person name="Lennard N."/>
            <person name="McLay K."/>
            <person name="Mayes R."/>
            <person name="Pettett A."/>
            <person name="Rajandream M.A."/>
            <person name="Lyne M."/>
            <person name="Benes V."/>
            <person name="Rechmann S."/>
            <person name="Borkova D."/>
            <person name="Bloecker H."/>
            <person name="Scharfe M."/>
            <person name="Grimm M."/>
            <person name="Loehnert T.-H."/>
            <person name="Dose S."/>
            <person name="de Haan M."/>
            <person name="Maarse A.C."/>
            <person name="Schaefer M."/>
            <person name="Mueller-Auer S."/>
            <person name="Gabel C."/>
            <person name="Fuchs M."/>
            <person name="Fartmann B."/>
            <person name="Granderath K."/>
            <person name="Dauner D."/>
            <person name="Herzl A."/>
            <person name="Neumann S."/>
            <person name="Argiriou A."/>
            <person name="Vitale D."/>
            <person name="Liguori R."/>
            <person name="Piravandi E."/>
            <person name="Massenet O."/>
            <person name="Quigley F."/>
            <person name="Clabauld G."/>
            <person name="Muendlein A."/>
            <person name="Felber R."/>
            <person name="Schnabl S."/>
            <person name="Hiller R."/>
            <person name="Schmidt W."/>
            <person name="Lecharny A."/>
            <person name="Aubourg S."/>
            <person name="Chefdor F."/>
            <person name="Cooke R."/>
            <person name="Berger C."/>
            <person name="Monfort A."/>
            <person name="Casacuberta E."/>
            <person name="Gibbons T."/>
            <person name="Weber N."/>
            <person name="Vandenbol M."/>
            <person name="Bargues M."/>
            <person name="Terol J."/>
            <person name="Torres A."/>
            <person name="Perez-Perez A."/>
            <person name="Purnelle B."/>
            <person name="Bent E."/>
            <person name="Johnson S."/>
            <person name="Tacon D."/>
            <person name="Jesse T."/>
            <person name="Heijnen L."/>
            <person name="Schwarz S."/>
            <person name="Scholler P."/>
            <person name="Heber S."/>
            <person name="Francs P."/>
            <person name="Bielke C."/>
            <person name="Frishman D."/>
            <person name="Haase D."/>
            <person name="Lemcke K."/>
            <person name="Mewes H.-W."/>
            <person name="Stocker S."/>
            <person name="Zaccaria P."/>
            <person name="Bevan M."/>
            <person name="Wilson R.K."/>
            <person name="de la Bastide M."/>
            <person name="Habermann K."/>
            <person name="Parnell L."/>
            <person name="Dedhia N."/>
            <person name="Gnoj L."/>
            <person name="Schutz K."/>
            <person name="Huang E."/>
            <person name="Spiegel L."/>
            <person name="Sekhon M."/>
            <person name="Murray J."/>
            <person name="Sheet P."/>
            <person name="Cordes M."/>
            <person name="Abu-Threideh J."/>
            <person name="Stoneking T."/>
            <person name="Kalicki J."/>
            <person name="Graves T."/>
            <person name="Harmon G."/>
            <person name="Edwards J."/>
            <person name="Latreille P."/>
            <person name="Courtney L."/>
            <person name="Cloud J."/>
            <person name="Abbott A."/>
            <person name="Scott K."/>
            <person name="Johnson D."/>
            <person name="Minx P."/>
            <person name="Bentley D."/>
            <person name="Fulton B."/>
            <person name="Miller N."/>
            <person name="Greco T."/>
            <person name="Kemp K."/>
            <person name="Kramer J."/>
            <person name="Fulton L."/>
            <person name="Mardis E."/>
            <person name="Dante M."/>
            <person name="Pepin K."/>
            <person name="Hillier L.W."/>
            <person name="Nelson J."/>
            <person name="Spieth J."/>
            <person name="Ryan E."/>
            <person name="Andrews S."/>
            <person name="Geisel C."/>
            <person name="Layman D."/>
            <person name="Du H."/>
            <person name="Ali J."/>
            <person name="Berghoff A."/>
            <person name="Jones K."/>
            <person name="Drone K."/>
            <person name="Cotton M."/>
            <person name="Joshu C."/>
            <person name="Antonoiu B."/>
            <person name="Zidanic M."/>
            <person name="Strong C."/>
            <person name="Sun H."/>
            <person name="Lamar B."/>
            <person name="Yordan C."/>
            <person name="Ma P."/>
            <person name="Zhong J."/>
            <person name="Preston R."/>
            <person name="Vil D."/>
            <person name="Shekher M."/>
            <person name="Matero A."/>
            <person name="Shah R."/>
            <person name="Swaby I.K."/>
            <person name="O'Shaughnessy A."/>
            <person name="Rodriguez M."/>
            <person name="Hoffman J."/>
            <person name="Till S."/>
            <person name="Granat S."/>
            <person name="Shohdy N."/>
            <person name="Hasegawa A."/>
            <person name="Hameed A."/>
            <person name="Lodhi M."/>
            <person name="Johnson A."/>
            <person name="Chen E."/>
            <person name="Marra M.A."/>
            <person name="Martienssen R."/>
            <person name="McCombie W.R."/>
        </authorList>
    </citation>
    <scope>NUCLEOTIDE SEQUENCE [LARGE SCALE GENOMIC DNA]</scope>
    <source>
        <strain>cv. Columbia</strain>
    </source>
</reference>
<reference key="3">
    <citation type="journal article" date="2017" name="Plant J.">
        <title>Araport11: a complete reannotation of the Arabidopsis thaliana reference genome.</title>
        <authorList>
            <person name="Cheng C.Y."/>
            <person name="Krishnakumar V."/>
            <person name="Chan A.P."/>
            <person name="Thibaud-Nissen F."/>
            <person name="Schobel S."/>
            <person name="Town C.D."/>
        </authorList>
    </citation>
    <scope>GENOME REANNOTATION</scope>
    <source>
        <strain>cv. Columbia</strain>
    </source>
</reference>
<reference key="4">
    <citation type="journal article" date="2003" name="Science">
        <title>Empirical analysis of transcriptional activity in the Arabidopsis genome.</title>
        <authorList>
            <person name="Yamada K."/>
            <person name="Lim J."/>
            <person name="Dale J.M."/>
            <person name="Chen H."/>
            <person name="Shinn P."/>
            <person name="Palm C.J."/>
            <person name="Southwick A.M."/>
            <person name="Wu H.C."/>
            <person name="Kim C.J."/>
            <person name="Nguyen M."/>
            <person name="Pham P.K."/>
            <person name="Cheuk R.F."/>
            <person name="Karlin-Newmann G."/>
            <person name="Liu S.X."/>
            <person name="Lam B."/>
            <person name="Sakano H."/>
            <person name="Wu T."/>
            <person name="Yu G."/>
            <person name="Miranda M."/>
            <person name="Quach H.L."/>
            <person name="Tripp M."/>
            <person name="Chang C.H."/>
            <person name="Lee J.M."/>
            <person name="Toriumi M.J."/>
            <person name="Chan M.M."/>
            <person name="Tang C.C."/>
            <person name="Onodera C.S."/>
            <person name="Deng J.M."/>
            <person name="Akiyama K."/>
            <person name="Ansari Y."/>
            <person name="Arakawa T."/>
            <person name="Banh J."/>
            <person name="Banno F."/>
            <person name="Bowser L."/>
            <person name="Brooks S.Y."/>
            <person name="Carninci P."/>
            <person name="Chao Q."/>
            <person name="Choy N."/>
            <person name="Enju A."/>
            <person name="Goldsmith A.D."/>
            <person name="Gurjal M."/>
            <person name="Hansen N.F."/>
            <person name="Hayashizaki Y."/>
            <person name="Johnson-Hopson C."/>
            <person name="Hsuan V.W."/>
            <person name="Iida K."/>
            <person name="Karnes M."/>
            <person name="Khan S."/>
            <person name="Koesema E."/>
            <person name="Ishida J."/>
            <person name="Jiang P.X."/>
            <person name="Jones T."/>
            <person name="Kawai J."/>
            <person name="Kamiya A."/>
            <person name="Meyers C."/>
            <person name="Nakajima M."/>
            <person name="Narusaka M."/>
            <person name="Seki M."/>
            <person name="Sakurai T."/>
            <person name="Satou M."/>
            <person name="Tamse R."/>
            <person name="Vaysberg M."/>
            <person name="Wallender E.K."/>
            <person name="Wong C."/>
            <person name="Yamamura Y."/>
            <person name="Yuan S."/>
            <person name="Shinozaki K."/>
            <person name="Davis R.W."/>
            <person name="Theologis A."/>
            <person name="Ecker J.R."/>
        </authorList>
    </citation>
    <scope>NUCLEOTIDE SEQUENCE [LARGE SCALE MRNA]</scope>
    <source>
        <strain>cv. Columbia</strain>
    </source>
</reference>
<reference key="5">
    <citation type="submission" date="2002-03" db="EMBL/GenBank/DDBJ databases">
        <title>Full-length cDNA from Arabidopsis thaliana.</title>
        <authorList>
            <person name="Brover V.V."/>
            <person name="Troukhan M.E."/>
            <person name="Alexandrov N.A."/>
            <person name="Lu Y.-P."/>
            <person name="Flavell R.B."/>
            <person name="Feldmann K.A."/>
        </authorList>
    </citation>
    <scope>NUCLEOTIDE SEQUENCE [LARGE SCALE MRNA]</scope>
</reference>
<reference key="6">
    <citation type="journal article" date="2006" name="J. Biol. Chem.">
        <title>Plasticity in the composition of the light harvesting antenna of higher plants preserves structural integrity and biological function.</title>
        <authorList>
            <person name="Ruban A.V."/>
            <person name="Solovieva S."/>
            <person name="Lee P.J."/>
            <person name="Ilioaia C."/>
            <person name="Wentworth M."/>
            <person name="Ganeteg U."/>
            <person name="Klimmek F."/>
            <person name="Chow W.S."/>
            <person name="Anderson J.M."/>
            <person name="Jansson S."/>
            <person name="Horton P."/>
        </authorList>
    </citation>
    <scope>SUBUNIT</scope>
    <scope>INTERACTION WITH LHCB3</scope>
    <scope>SUBCELLULAR LOCATION</scope>
</reference>
<reference key="7">
    <citation type="journal article" date="2009" name="Plant Physiol.">
        <title>Large-scale Arabidopsis phosphoproteome profiling reveals novel chloroplast kinase substrates and phosphorylation networks.</title>
        <authorList>
            <person name="Reiland S."/>
            <person name="Messerli G."/>
            <person name="Baerenfaller K."/>
            <person name="Gerrits B."/>
            <person name="Endler A."/>
            <person name="Grossmann J."/>
            <person name="Gruissem W."/>
            <person name="Baginsky S."/>
        </authorList>
    </citation>
    <scope>IDENTIFICATION BY MASS SPECTROMETRY [LARGE SCALE ANALYSIS]</scope>
</reference>
<proteinExistence type="evidence at protein level"/>
<comment type="function">
    <text>The light-harvesting complex (LHC) functions as a light receptor, it captures and delivers excitation energy to photosystems with which it is closely associated.</text>
</comment>
<comment type="cofactor">
    <text evidence="1">Binds at least 14 chlorophylls (8 Chl-a and 6 Chl-b) and carotenoids such as lutein and neoxanthin.</text>
</comment>
<comment type="subunit">
    <text evidence="3">Forms heterotrimers with LHCB3 (PubMed:16551629). The LHC complex consists of chlorophyll a-b binding proteins.</text>
</comment>
<comment type="subcellular location">
    <subcellularLocation>
        <location evidence="3">Plastid</location>
        <location evidence="3">Chloroplast thylakoid membrane</location>
        <topology>Multi-pass membrane protein</topology>
    </subcellularLocation>
</comment>
<comment type="domain">
    <text>The N-terminus of the protein extends into the stroma where it is involved with adhesion of granal membranes and post-translational modifications; both are believed to mediate the distribution of excitation energy between photosystems I and II.</text>
</comment>
<comment type="PTM">
    <text evidence="1">Photoregulated by reversible phosphorylation of its threonine residues.</text>
</comment>
<comment type="similarity">
    <text evidence="4">Belongs to the light-harvesting chlorophyll a/b-binding (LHC) protein family.</text>
</comment>
<accession>Q9XF89</accession>
<accession>Q8LAB1</accession>
<evidence type="ECO:0000250" key="1"/>
<evidence type="ECO:0000255" key="2"/>
<evidence type="ECO:0000269" key="3">
    <source>
    </source>
</evidence>
<evidence type="ECO:0000305" key="4"/>
<evidence type="ECO:0007829" key="5">
    <source>
        <dbReference type="PDB" id="7OUI"/>
    </source>
</evidence>
<name>CB5_ARATH</name>
<feature type="transit peptide" description="Chloroplast" evidence="4">
    <location>
        <begin position="1"/>
        <end position="48"/>
    </location>
</feature>
<feature type="chain" id="PRO_0000003650" description="Chlorophyll a-b binding protein CP26, chloroplastic">
    <location>
        <begin position="49"/>
        <end position="280"/>
    </location>
</feature>
<feature type="transmembrane region" description="Helical" evidence="2">
    <location>
        <begin position="110"/>
        <end position="130"/>
    </location>
</feature>
<feature type="transmembrane region" description="Helical" evidence="2">
    <location>
        <begin position="167"/>
        <end position="187"/>
    </location>
</feature>
<feature type="transmembrane region" description="Helical" evidence="2">
    <location>
        <begin position="231"/>
        <end position="251"/>
    </location>
</feature>
<feature type="binding site" description="axial binding residue" evidence="1">
    <location>
        <position position="70"/>
    </location>
    <ligand>
        <name>chlorophyll b</name>
        <dbReference type="ChEBI" id="CHEBI:61721"/>
        <label>1</label>
    </ligand>
    <ligandPart>
        <name>Mg</name>
        <dbReference type="ChEBI" id="CHEBI:25107"/>
    </ligandPart>
</feature>
<feature type="binding site" evidence="1">
    <location>
        <position position="95"/>
    </location>
    <ligand>
        <name>chlorophyll a</name>
        <dbReference type="ChEBI" id="CHEBI:58416"/>
        <label>1</label>
    </ligand>
</feature>
<feature type="binding site" description="axial binding residue" evidence="1">
    <location>
        <position position="114"/>
    </location>
    <ligand>
        <name>chlorophyll a</name>
        <dbReference type="ChEBI" id="CHEBI:58416"/>
        <label>1</label>
    </ligand>
    <ligandPart>
        <name>Mg</name>
        <dbReference type="ChEBI" id="CHEBI:25107"/>
    </ligandPart>
</feature>
<feature type="binding site" description="axial binding residue" evidence="1">
    <location>
        <position position="117"/>
    </location>
    <ligand>
        <name>chlorophyll a</name>
        <dbReference type="ChEBI" id="CHEBI:58416"/>
        <label>2</label>
    </ligand>
    <ligandPart>
        <name>Mg</name>
        <dbReference type="ChEBI" id="CHEBI:25107"/>
    </ligandPart>
</feature>
<feature type="binding site" evidence="1">
    <location>
        <position position="119"/>
    </location>
    <ligand>
        <name>chlorophyll b</name>
        <dbReference type="ChEBI" id="CHEBI:61721"/>
        <label>2</label>
    </ligand>
</feature>
<feature type="binding site" description="axial binding residue" evidence="1">
    <location>
        <position position="167"/>
    </location>
    <ligand>
        <name>chlorophyll b</name>
        <dbReference type="ChEBI" id="CHEBI:61721"/>
        <label>2</label>
    </ligand>
    <ligandPart>
        <name>Mg</name>
        <dbReference type="ChEBI" id="CHEBI:25107"/>
    </ligandPart>
</feature>
<feature type="binding site" description="axial binding residue" evidence="1">
    <location>
        <position position="186"/>
    </location>
    <ligand>
        <name>chlorophyll b</name>
        <dbReference type="ChEBI" id="CHEBI:61721"/>
        <label>3</label>
    </ligand>
    <ligandPart>
        <name>Mg</name>
        <dbReference type="ChEBI" id="CHEBI:25107"/>
    </ligandPart>
</feature>
<feature type="binding site" evidence="1">
    <location>
        <position position="189"/>
    </location>
    <ligand>
        <name>chlorophyll b</name>
        <dbReference type="ChEBI" id="CHEBI:61721"/>
        <label>4</label>
    </ligand>
</feature>
<feature type="binding site" evidence="1">
    <location>
        <position position="224"/>
    </location>
    <ligand>
        <name>chlorophyll a</name>
        <dbReference type="ChEBI" id="CHEBI:58416"/>
        <label>5</label>
    </ligand>
</feature>
<feature type="binding site" description="axial binding residue" evidence="1">
    <location>
        <position position="225"/>
    </location>
    <ligand>
        <name>chlorophyll a</name>
        <dbReference type="ChEBI" id="CHEBI:58416"/>
        <label>3</label>
    </ligand>
    <ligandPart>
        <name>Mg</name>
        <dbReference type="ChEBI" id="CHEBI:25107"/>
    </ligandPart>
</feature>
<feature type="binding site" description="axial binding residue" evidence="1">
    <location>
        <position position="228"/>
    </location>
    <ligand>
        <name>chlorophyll a</name>
        <dbReference type="ChEBI" id="CHEBI:58416"/>
        <label>4</label>
    </ligand>
    <ligandPart>
        <name>Mg</name>
        <dbReference type="ChEBI" id="CHEBI:25107"/>
    </ligandPart>
</feature>
<feature type="binding site" evidence="1">
    <location>
        <position position="230"/>
    </location>
    <ligand>
        <name>chlorophyll a</name>
        <dbReference type="ChEBI" id="CHEBI:58416"/>
        <label>1</label>
    </ligand>
</feature>
<feature type="binding site" description="axial binding residue" evidence="1">
    <location>
        <position position="242"/>
    </location>
    <ligand>
        <name>chlorophyll a</name>
        <dbReference type="ChEBI" id="CHEBI:58416"/>
        <label>5</label>
    </ligand>
    <ligandPart>
        <name>Mg</name>
        <dbReference type="ChEBI" id="CHEBI:25107"/>
    </ligandPart>
</feature>
<feature type="binding site" description="axial binding residue" evidence="1">
    <location>
        <position position="257"/>
    </location>
    <ligand>
        <name>chlorophyll a</name>
        <dbReference type="ChEBI" id="CHEBI:58416"/>
        <label>6</label>
    </ligand>
    <ligandPart>
        <name>Mg</name>
        <dbReference type="ChEBI" id="CHEBI:25107"/>
    </ligandPart>
</feature>
<feature type="sequence conflict" description="In Ref. 5; AAM65487." evidence="4" ref="5">
    <original>A</original>
    <variation>S</variation>
    <location>
        <position position="185"/>
    </location>
</feature>
<feature type="helix" evidence="5">
    <location>
        <begin position="58"/>
        <end position="62"/>
    </location>
</feature>
<feature type="turn" evidence="5">
    <location>
        <begin position="73"/>
        <end position="75"/>
    </location>
</feature>
<feature type="strand" evidence="5">
    <location>
        <begin position="78"/>
        <end position="80"/>
    </location>
</feature>
<feature type="helix" evidence="5">
    <location>
        <begin position="104"/>
        <end position="137"/>
    </location>
</feature>
<feature type="helix" evidence="5">
    <location>
        <begin position="147"/>
        <end position="150"/>
    </location>
</feature>
<feature type="helix" evidence="5">
    <location>
        <begin position="151"/>
        <end position="154"/>
    </location>
</feature>
<feature type="strand" evidence="5">
    <location>
        <begin position="155"/>
        <end position="157"/>
    </location>
</feature>
<feature type="helix" evidence="5">
    <location>
        <begin position="171"/>
        <end position="191"/>
    </location>
</feature>
<feature type="turn" evidence="5">
    <location>
        <begin position="192"/>
        <end position="194"/>
    </location>
</feature>
<feature type="strand" evidence="5">
    <location>
        <begin position="199"/>
        <end position="201"/>
    </location>
</feature>
<feature type="helix" evidence="5">
    <location>
        <begin position="204"/>
        <end position="206"/>
    </location>
</feature>
<feature type="helix" evidence="5">
    <location>
        <begin position="215"/>
        <end position="245"/>
    </location>
</feature>
<feature type="helix" evidence="5">
    <location>
        <begin position="250"/>
        <end position="259"/>
    </location>
</feature>
<feature type="turn" evidence="5">
    <location>
        <begin position="261"/>
        <end position="263"/>
    </location>
</feature>
<feature type="helix" evidence="5">
    <location>
        <begin position="266"/>
        <end position="269"/>
    </location>
</feature>
<protein>
    <recommendedName>
        <fullName>Chlorophyll a-b binding protein CP26, chloroplastic</fullName>
    </recommendedName>
    <alternativeName>
        <fullName>LHCB5</fullName>
    </alternativeName>
    <alternativeName>
        <fullName>LHCIIc</fullName>
    </alternativeName>
    <alternativeName>
        <fullName>Light-harvesting complex II protein 5</fullName>
    </alternativeName>
</protein>
<gene>
    <name type="primary">LHCB5</name>
    <name type="ordered locus">At4g10340</name>
    <name type="ORF">F24G24.140</name>
</gene>
<dbReference type="EMBL" id="AF134129">
    <property type="protein sequence ID" value="AAD28776.1"/>
    <property type="molecule type" value="mRNA"/>
</dbReference>
<dbReference type="EMBL" id="AL049488">
    <property type="protein sequence ID" value="CAB39787.1"/>
    <property type="molecule type" value="Genomic_DNA"/>
</dbReference>
<dbReference type="EMBL" id="AL161517">
    <property type="protein sequence ID" value="CAB78157.1"/>
    <property type="molecule type" value="Genomic_DNA"/>
</dbReference>
<dbReference type="EMBL" id="CP002687">
    <property type="protein sequence ID" value="AEE82869.1"/>
    <property type="molecule type" value="Genomic_DNA"/>
</dbReference>
<dbReference type="EMBL" id="AF326900">
    <property type="protein sequence ID" value="AAG41482.1"/>
    <property type="molecule type" value="mRNA"/>
</dbReference>
<dbReference type="EMBL" id="AF339718">
    <property type="protein sequence ID" value="AAK00400.1"/>
    <property type="molecule type" value="mRNA"/>
</dbReference>
<dbReference type="EMBL" id="AF424597">
    <property type="protein sequence ID" value="AAL11591.1"/>
    <property type="molecule type" value="mRNA"/>
</dbReference>
<dbReference type="EMBL" id="AF380631">
    <property type="protein sequence ID" value="AAK55712.1"/>
    <property type="molecule type" value="mRNA"/>
</dbReference>
<dbReference type="EMBL" id="AY054126">
    <property type="protein sequence ID" value="AAL06787.1"/>
    <property type="molecule type" value="mRNA"/>
</dbReference>
<dbReference type="EMBL" id="AY087939">
    <property type="protein sequence ID" value="AAM65487.1"/>
    <property type="molecule type" value="mRNA"/>
</dbReference>
<dbReference type="PIR" id="T04049">
    <property type="entry name" value="T04049"/>
</dbReference>
<dbReference type="RefSeq" id="NP_192772.1">
    <property type="nucleotide sequence ID" value="NM_117102.4"/>
</dbReference>
<dbReference type="PDB" id="5MDX">
    <property type="method" value="EM"/>
    <property type="resolution" value="5.30 A"/>
    <property type="chains" value="S/s=49-280"/>
</dbReference>
<dbReference type="PDB" id="7OUI">
    <property type="method" value="EM"/>
    <property type="resolution" value="2.79 A"/>
    <property type="chains" value="S/s=49-280"/>
</dbReference>
<dbReference type="PDBsum" id="5MDX"/>
<dbReference type="PDBsum" id="7OUI"/>
<dbReference type="EMDB" id="EMD-13078"/>
<dbReference type="EMDB" id="EMD-3491"/>
<dbReference type="SMR" id="Q9XF89"/>
<dbReference type="BioGRID" id="11925">
    <property type="interactions" value="23"/>
</dbReference>
<dbReference type="DIP" id="DIP-59004N"/>
<dbReference type="FunCoup" id="Q9XF89">
    <property type="interactions" value="1105"/>
</dbReference>
<dbReference type="IntAct" id="Q9XF89">
    <property type="interactions" value="2"/>
</dbReference>
<dbReference type="STRING" id="3702.Q9XF89"/>
<dbReference type="TCDB" id="3.E.2.2.3">
    <property type="family name" value="the photosynthetic reaction center (prc) family"/>
</dbReference>
<dbReference type="iPTMnet" id="Q9XF89"/>
<dbReference type="PaxDb" id="3702-AT4G10340.1"/>
<dbReference type="ProteomicsDB" id="223913"/>
<dbReference type="EnsemblPlants" id="AT4G10340.1">
    <property type="protein sequence ID" value="AT4G10340.1"/>
    <property type="gene ID" value="AT4G10340"/>
</dbReference>
<dbReference type="GeneID" id="826626"/>
<dbReference type="Gramene" id="AT4G10340.1">
    <property type="protein sequence ID" value="AT4G10340.1"/>
    <property type="gene ID" value="AT4G10340"/>
</dbReference>
<dbReference type="KEGG" id="ath:AT4G10340"/>
<dbReference type="Araport" id="AT4G10340"/>
<dbReference type="TAIR" id="AT4G10340">
    <property type="gene designation" value="LHCB5"/>
</dbReference>
<dbReference type="eggNOG" id="ENOG502QV5A">
    <property type="taxonomic scope" value="Eukaryota"/>
</dbReference>
<dbReference type="HOGENOM" id="CLU_057943_2_2_1"/>
<dbReference type="InParanoid" id="Q9XF89"/>
<dbReference type="OMA" id="YFRITNG"/>
<dbReference type="PhylomeDB" id="Q9XF89"/>
<dbReference type="CD-CODE" id="4299E36E">
    <property type="entry name" value="Nucleolus"/>
</dbReference>
<dbReference type="PRO" id="PR:Q9XF89"/>
<dbReference type="Proteomes" id="UP000006548">
    <property type="component" value="Chromosome 4"/>
</dbReference>
<dbReference type="ExpressionAtlas" id="Q9XF89">
    <property type="expression patterns" value="baseline and differential"/>
</dbReference>
<dbReference type="GO" id="GO:0009507">
    <property type="term" value="C:chloroplast"/>
    <property type="evidence" value="ECO:0007005"/>
    <property type="project" value="TAIR"/>
</dbReference>
<dbReference type="GO" id="GO:0009534">
    <property type="term" value="C:chloroplast thylakoid"/>
    <property type="evidence" value="ECO:0007005"/>
    <property type="project" value="TAIR"/>
</dbReference>
<dbReference type="GO" id="GO:0009535">
    <property type="term" value="C:chloroplast thylakoid membrane"/>
    <property type="evidence" value="ECO:0007005"/>
    <property type="project" value="TAIR"/>
</dbReference>
<dbReference type="GO" id="GO:0005829">
    <property type="term" value="C:cytosol"/>
    <property type="evidence" value="ECO:0007005"/>
    <property type="project" value="TAIR"/>
</dbReference>
<dbReference type="GO" id="GO:0009522">
    <property type="term" value="C:photosystem I"/>
    <property type="evidence" value="ECO:0007669"/>
    <property type="project" value="UniProtKB-KW"/>
</dbReference>
<dbReference type="GO" id="GO:0009783">
    <property type="term" value="C:photosystem II antenna complex"/>
    <property type="evidence" value="ECO:0000315"/>
    <property type="project" value="TAIR"/>
</dbReference>
<dbReference type="GO" id="GO:0010287">
    <property type="term" value="C:plastoglobule"/>
    <property type="evidence" value="ECO:0007005"/>
    <property type="project" value="TAIR"/>
</dbReference>
<dbReference type="GO" id="GO:0009517">
    <property type="term" value="C:PSII associated light-harvesting complex II"/>
    <property type="evidence" value="ECO:0000314"/>
    <property type="project" value="TAIR"/>
</dbReference>
<dbReference type="GO" id="GO:0009579">
    <property type="term" value="C:thylakoid"/>
    <property type="evidence" value="ECO:0007005"/>
    <property type="project" value="TAIR"/>
</dbReference>
<dbReference type="GO" id="GO:0042651">
    <property type="term" value="C:thylakoid membrane"/>
    <property type="evidence" value="ECO:0000314"/>
    <property type="project" value="UniProtKB"/>
</dbReference>
<dbReference type="GO" id="GO:0016168">
    <property type="term" value="F:chlorophyll binding"/>
    <property type="evidence" value="ECO:0007669"/>
    <property type="project" value="UniProtKB-KW"/>
</dbReference>
<dbReference type="GO" id="GO:0046872">
    <property type="term" value="F:metal ion binding"/>
    <property type="evidence" value="ECO:0007669"/>
    <property type="project" value="UniProtKB-KW"/>
</dbReference>
<dbReference type="GO" id="GO:0003729">
    <property type="term" value="F:mRNA binding"/>
    <property type="evidence" value="ECO:0000314"/>
    <property type="project" value="TAIR"/>
</dbReference>
<dbReference type="GO" id="GO:0019904">
    <property type="term" value="F:protein domain specific binding"/>
    <property type="evidence" value="ECO:0000353"/>
    <property type="project" value="CAFA"/>
</dbReference>
<dbReference type="GO" id="GO:0010196">
    <property type="term" value="P:nonphotochemical quenching"/>
    <property type="evidence" value="ECO:0000315"/>
    <property type="project" value="TAIR"/>
</dbReference>
<dbReference type="GO" id="GO:0015979">
    <property type="term" value="P:photosynthesis"/>
    <property type="evidence" value="ECO:0000315"/>
    <property type="project" value="TAIR"/>
</dbReference>
<dbReference type="GO" id="GO:0009765">
    <property type="term" value="P:photosynthesis, light harvesting"/>
    <property type="evidence" value="ECO:0007669"/>
    <property type="project" value="InterPro"/>
</dbReference>
<dbReference type="GO" id="GO:0010207">
    <property type="term" value="P:photosystem II assembly"/>
    <property type="evidence" value="ECO:0000315"/>
    <property type="project" value="TAIR"/>
</dbReference>
<dbReference type="FunFam" id="1.10.3460.10:FF:000007">
    <property type="entry name" value="Chlorophyll a-b binding protein, chloroplastic"/>
    <property type="match status" value="1"/>
</dbReference>
<dbReference type="Gene3D" id="1.10.3460.10">
    <property type="entry name" value="Chlorophyll a/b binding protein domain"/>
    <property type="match status" value="1"/>
</dbReference>
<dbReference type="InterPro" id="IPR001344">
    <property type="entry name" value="Chloro_AB-bd_pln"/>
</dbReference>
<dbReference type="InterPro" id="IPR022796">
    <property type="entry name" value="Chloroa_b-bind"/>
</dbReference>
<dbReference type="PANTHER" id="PTHR21649">
    <property type="entry name" value="CHLOROPHYLL A/B BINDING PROTEIN"/>
    <property type="match status" value="1"/>
</dbReference>
<dbReference type="Pfam" id="PF00504">
    <property type="entry name" value="Chloroa_b-bind"/>
    <property type="match status" value="1"/>
</dbReference>
<dbReference type="SUPFAM" id="SSF103511">
    <property type="entry name" value="Chlorophyll a-b binding protein"/>
    <property type="match status" value="1"/>
</dbReference>
<sequence>MASLGVSEMLGTPLNFRAVSRSSAPLASSPSTFKTVALFSKKKPAPAKSKAVSETSDELAKWYGPDRRIFLPDGLLDRSEIPEYLNGEVAGDYGYDPFGLGKKPENFAKYQAFELIHARWAMLGAAGFIIPEALNKYGANCGPEAVWFKTGALLLDGNTLNYFGKNIPINLVLAVVAEVVLLGGAEYYRITNGLDFEDKLHPGGPFDPLGLAKDPEQGALLKVKEIKNGRLAMFAMLGFFIQAYVTGEGPVENLAKHLSDPFGNNLLTVIAGTAERAPTL</sequence>
<organism>
    <name type="scientific">Arabidopsis thaliana</name>
    <name type="common">Mouse-ear cress</name>
    <dbReference type="NCBI Taxonomy" id="3702"/>
    <lineage>
        <taxon>Eukaryota</taxon>
        <taxon>Viridiplantae</taxon>
        <taxon>Streptophyta</taxon>
        <taxon>Embryophyta</taxon>
        <taxon>Tracheophyta</taxon>
        <taxon>Spermatophyta</taxon>
        <taxon>Magnoliopsida</taxon>
        <taxon>eudicotyledons</taxon>
        <taxon>Gunneridae</taxon>
        <taxon>Pentapetalae</taxon>
        <taxon>rosids</taxon>
        <taxon>malvids</taxon>
        <taxon>Brassicales</taxon>
        <taxon>Brassicaceae</taxon>
        <taxon>Camelineae</taxon>
        <taxon>Arabidopsis</taxon>
    </lineage>
</organism>
<keyword id="KW-0002">3D-structure</keyword>
<keyword id="KW-0148">Chlorophyll</keyword>
<keyword id="KW-0150">Chloroplast</keyword>
<keyword id="KW-0157">Chromophore</keyword>
<keyword id="KW-0460">Magnesium</keyword>
<keyword id="KW-0472">Membrane</keyword>
<keyword id="KW-0479">Metal-binding</keyword>
<keyword id="KW-0597">Phosphoprotein</keyword>
<keyword id="KW-0602">Photosynthesis</keyword>
<keyword id="KW-0603">Photosystem I</keyword>
<keyword id="KW-0604">Photosystem II</keyword>
<keyword id="KW-0934">Plastid</keyword>
<keyword id="KW-1185">Reference proteome</keyword>
<keyword id="KW-0793">Thylakoid</keyword>
<keyword id="KW-0809">Transit peptide</keyword>
<keyword id="KW-0812">Transmembrane</keyword>
<keyword id="KW-1133">Transmembrane helix</keyword>